<keyword id="KW-0002">3D-structure</keyword>
<keyword id="KW-0106">Calcium</keyword>
<keyword id="KW-0903">Direct protein sequencing</keyword>
<keyword id="KW-1015">Disulfide bond</keyword>
<keyword id="KW-0325">Glycoprotein</keyword>
<keyword id="KW-0326">Glycosidase</keyword>
<keyword id="KW-1032">Host cell membrane</keyword>
<keyword id="KW-1043">Host membrane</keyword>
<keyword id="KW-0378">Hydrolase</keyword>
<keyword id="KW-0472">Membrane</keyword>
<keyword id="KW-0479">Metal-binding</keyword>
<keyword id="KW-0735">Signal-anchor</keyword>
<keyword id="KW-0812">Transmembrane</keyword>
<keyword id="KW-1133">Transmembrane helix</keyword>
<keyword id="KW-0946">Virion</keyword>
<name>NRAM_INBBE</name>
<comment type="function">
    <text evidence="1">Catalyzes the removal of terminal sialic acid residues from viral and cellular glycoconjugates. Cleaves off the terminal sialic acids on the glycosylated HA during virus budding to facilitate virus release. Additionally helps virus spread through the circulation by further removing sialic acids from the cell surface. These cleavages prevent self-aggregation and ensure the efficient spread of the progeny virus from cell to cell. Otherwise, infection would be limited to one round of replication. Described as a receptor-destroying enzyme because it cleaves a terminal sialic acid from the cellular receptors. May facilitate viral invasion of the upper airways by cleaving the sialic acid moieties on the mucin of the airway epithelial cells. Likely to plays a role in the budding process through its association with lipid rafts during intracellular transport. May additionally display a raft-association independent effect on budding. Plays a role in the determination of host range restriction on replication and virulence. Sialidase activity in late endosome/lysosome traffic seems to enhance virus replication.</text>
</comment>
<comment type="catalytic activity">
    <reaction evidence="1">
        <text>Hydrolysis of alpha-(2-&gt;3)-, alpha-(2-&gt;6)-, alpha-(2-&gt;8)- glycosidic linkages of terminal sialic acid residues in oligosaccharides, glycoproteins, glycolipids, colominic acid and synthetic substrates.</text>
        <dbReference type="EC" id="3.2.1.18"/>
    </reaction>
</comment>
<comment type="cofactor">
    <cofactor evidence="1 2">
        <name>Ca(2+)</name>
        <dbReference type="ChEBI" id="CHEBI:29108"/>
    </cofactor>
    <text evidence="2">Binds 1 Ca(2+) ion per subunit.</text>
</comment>
<comment type="activity regulation">
    <text evidence="1">Inhibited by the neuraminidase inhibitors zanamivir (Relenza) and oseltamivir (Tamiflu). These drugs interfere with the release of progeny virus from infected cells and are effective against all influenza strains. Resistance to neuraminidase inhibitors is quite rare.</text>
</comment>
<comment type="subunit">
    <text evidence="1 2">Homotetramer.</text>
</comment>
<comment type="subcellular location">
    <subcellularLocation>
        <location evidence="1">Virion membrane</location>
    </subcellularLocation>
    <subcellularLocation>
        <location evidence="1">Host apical cell membrane</location>
        <topology evidence="1">Single-pass type II membrane protein</topology>
    </subcellularLocation>
    <text evidence="1">Preferentially accumulates at the apical plasma membrane in infected polarized epithelial cells, which is the virus assembly site. Uses lipid rafts for cell surface transport and apical sorting. In the virion, forms a mushroom-shaped spike on the surface of the membrane.</text>
</comment>
<comment type="domain">
    <text evidence="1">Intact N-terminus is essential for virion morphogenesis. Possesses two apical sorting signals, one in the ectodomain, which is likely to be a glycan, and the other in the transmembrane domain. The transmembrane domain also plays a role in lipid raft association.</text>
</comment>
<comment type="PTM">
    <text evidence="1 2">N-glycosylated.</text>
</comment>
<comment type="miscellaneous">
    <text>The influenza B genome consist of 8 RNA segments. Genetic variation of hemagglutinin and/or neuraminidase genes results in the emergence of new influenza strains. The mechanism of variation can be the result of point mutations or the result of genetic reassortment between segments of two different strains.</text>
</comment>
<comment type="similarity">
    <text evidence="1">Belongs to the glycosyl hydrolase 34 family.</text>
</comment>
<proteinExistence type="evidence at protein level"/>
<evidence type="ECO:0000255" key="1">
    <source>
        <dbReference type="HAMAP-Rule" id="MF_04071"/>
    </source>
</evidence>
<evidence type="ECO:0000269" key="2">
    <source>
    </source>
</evidence>
<evidence type="ECO:0007829" key="3">
    <source>
        <dbReference type="PDB" id="1A4Q"/>
    </source>
</evidence>
<evidence type="ECO:0007829" key="4">
    <source>
        <dbReference type="PDB" id="1NSC"/>
    </source>
</evidence>
<dbReference type="EC" id="3.2.1.18" evidence="1"/>
<dbReference type="EMBL" id="M54967">
    <property type="protein sequence ID" value="AAA43733.1"/>
    <property type="molecule type" value="Genomic_RNA"/>
</dbReference>
<dbReference type="PIR" id="B38520">
    <property type="entry name" value="NMIVB1"/>
</dbReference>
<dbReference type="PDB" id="1A4G">
    <property type="method" value="X-ray"/>
    <property type="resolution" value="2.20 A"/>
    <property type="chains" value="A/B=76-465"/>
</dbReference>
<dbReference type="PDB" id="1A4Q">
    <property type="method" value="X-ray"/>
    <property type="resolution" value="1.90 A"/>
    <property type="chains" value="A/B=76-465"/>
</dbReference>
<dbReference type="PDB" id="1NSB">
    <property type="method" value="X-ray"/>
    <property type="resolution" value="2.20 A"/>
    <property type="chains" value="A/B=76-465"/>
</dbReference>
<dbReference type="PDB" id="1NSC">
    <property type="method" value="X-ray"/>
    <property type="resolution" value="1.70 A"/>
    <property type="chains" value="A/B=76-465"/>
</dbReference>
<dbReference type="PDB" id="1NSD">
    <property type="method" value="X-ray"/>
    <property type="resolution" value="1.80 A"/>
    <property type="chains" value="A/B=76-465"/>
</dbReference>
<dbReference type="PDBsum" id="1A4G"/>
<dbReference type="PDBsum" id="1A4Q"/>
<dbReference type="PDBsum" id="1NSB"/>
<dbReference type="PDBsum" id="1NSC"/>
<dbReference type="PDBsum" id="1NSD"/>
<dbReference type="SMR" id="P27907"/>
<dbReference type="DrugBank" id="DB06614">
    <property type="generic name" value="Peramivir"/>
</dbReference>
<dbReference type="DrugBank" id="DB00558">
    <property type="generic name" value="Zanamivir"/>
</dbReference>
<dbReference type="CAZy" id="GH34">
    <property type="family name" value="Glycoside Hydrolase Family 34"/>
</dbReference>
<dbReference type="GlyCosmos" id="P27907">
    <property type="glycosylation" value="4 sites, No reported glycans"/>
</dbReference>
<dbReference type="iPTMnet" id="P27907"/>
<dbReference type="BRENDA" id="3.2.1.18">
    <property type="organism ID" value="7480"/>
</dbReference>
<dbReference type="EvolutionaryTrace" id="P27907"/>
<dbReference type="GO" id="GO:0020002">
    <property type="term" value="C:host cell plasma membrane"/>
    <property type="evidence" value="ECO:0007669"/>
    <property type="project" value="UniProtKB-SubCell"/>
</dbReference>
<dbReference type="GO" id="GO:0016020">
    <property type="term" value="C:membrane"/>
    <property type="evidence" value="ECO:0007669"/>
    <property type="project" value="UniProtKB-UniRule"/>
</dbReference>
<dbReference type="GO" id="GO:0055036">
    <property type="term" value="C:virion membrane"/>
    <property type="evidence" value="ECO:0007669"/>
    <property type="project" value="UniProtKB-SubCell"/>
</dbReference>
<dbReference type="GO" id="GO:0004308">
    <property type="term" value="F:exo-alpha-sialidase activity"/>
    <property type="evidence" value="ECO:0007669"/>
    <property type="project" value="UniProtKB-UniRule"/>
</dbReference>
<dbReference type="GO" id="GO:0046872">
    <property type="term" value="F:metal ion binding"/>
    <property type="evidence" value="ECO:0007669"/>
    <property type="project" value="UniProtKB-UniRule"/>
</dbReference>
<dbReference type="GO" id="GO:0005975">
    <property type="term" value="P:carbohydrate metabolic process"/>
    <property type="evidence" value="ECO:0007669"/>
    <property type="project" value="InterPro"/>
</dbReference>
<dbReference type="GO" id="GO:0046761">
    <property type="term" value="P:viral budding from plasma membrane"/>
    <property type="evidence" value="ECO:0007669"/>
    <property type="project" value="UniProtKB-UniRule"/>
</dbReference>
<dbReference type="CDD" id="cd15483">
    <property type="entry name" value="Influenza_NA"/>
    <property type="match status" value="1"/>
</dbReference>
<dbReference type="Gene3D" id="2.120.10.10">
    <property type="match status" value="1"/>
</dbReference>
<dbReference type="HAMAP" id="MF_04071">
    <property type="entry name" value="INFV_NRAM"/>
    <property type="match status" value="1"/>
</dbReference>
<dbReference type="InterPro" id="IPR001860">
    <property type="entry name" value="Glyco_hydro_34"/>
</dbReference>
<dbReference type="InterPro" id="IPR033654">
    <property type="entry name" value="Sialidase_Influenza_A/B"/>
</dbReference>
<dbReference type="InterPro" id="IPR036278">
    <property type="entry name" value="Sialidase_sf"/>
</dbReference>
<dbReference type="Pfam" id="PF00064">
    <property type="entry name" value="Neur"/>
    <property type="match status" value="1"/>
</dbReference>
<dbReference type="SUPFAM" id="SSF50939">
    <property type="entry name" value="Sialidases"/>
    <property type="match status" value="1"/>
</dbReference>
<reference key="1">
    <citation type="journal article" date="1991" name="Virology">
        <title>Sequence and crystallization of influenza virus B/Beijing/1/87 neuraminidase.</title>
        <authorList>
            <person name="Burmeister W.P."/>
            <person name="Daniels R.S."/>
            <person name="Dayan S."/>
            <person name="Gagnon J."/>
            <person name="Cusack S."/>
            <person name="Ruigrok R.W."/>
        </authorList>
    </citation>
    <scope>NUCLEOTIDE SEQUENCE [GENOMIC RNA]</scope>
    <scope>PARTIAL PROTEIN SEQUENCE</scope>
</reference>
<reference key="2">
    <citation type="journal article" date="2005" name="N. Engl. J. Med.">
        <title>Neuraminidase inhibitors for influenza.</title>
        <authorList>
            <person name="Moscona A."/>
        </authorList>
    </citation>
    <scope>REVIEW</scope>
</reference>
<reference key="3">
    <citation type="journal article" date="1992" name="EMBO J.">
        <title>The 2.2-A resolution crystal structure of influenza B neuraminidase and its complex with sialic acid.</title>
        <authorList>
            <person name="Burmeister W.P."/>
            <person name="Ruigrok R.W."/>
            <person name="Cusack S."/>
        </authorList>
    </citation>
    <scope>X-RAY CRYSTALLOGRAPHY (2.20 ANGSTROMS) OF 76-465 IN COMPLEX WITH CALCIUM AND SIALIC ACID</scope>
    <scope>GLYCOSYLATION AT ASN-283</scope>
    <scope>SUBUNIT</scope>
    <scope>COFACTOR</scope>
</reference>
<reference key="4">
    <citation type="journal article" date="1998" name="J. Med. Chem.">
        <title>Dihydropyrancarboxamides related to zanamivir: a new series of inhibitors of influenza virus sialidases. 2. Crystallographic and molecular modeling study of complexes of 4-amino-4H-pyran-6-carboxamides and sialidase from influenza virus types A and B.</title>
        <authorList>
            <person name="Taylor N.R."/>
            <person name="Cleasby A."/>
            <person name="Singh O."/>
            <person name="Skarzynski T."/>
            <person name="Wonacott A.J."/>
            <person name="Smith P.W."/>
            <person name="Sollis S.L."/>
            <person name="Howes P.D."/>
            <person name="Cherry P.C."/>
            <person name="Bethell R."/>
            <person name="Colman P."/>
            <person name="Varghese J."/>
        </authorList>
    </citation>
    <scope>X-RAY CRYSTALLOGRAPHY (2.2 ANGSTROMS) OF 76-465</scope>
</reference>
<organism>
    <name type="scientific">Influenza B virus (strain B/Beijing/1/1987)</name>
    <dbReference type="NCBI Taxonomy" id="11525"/>
    <lineage>
        <taxon>Viruses</taxon>
        <taxon>Riboviria</taxon>
        <taxon>Orthornavirae</taxon>
        <taxon>Negarnaviricota</taxon>
        <taxon>Polyploviricotina</taxon>
        <taxon>Insthoviricetes</taxon>
        <taxon>Articulavirales</taxon>
        <taxon>Orthomyxoviridae</taxon>
        <taxon>Betainfluenzavirus</taxon>
        <taxon>Betainfluenzavirus influenzae</taxon>
        <taxon>Influenza B virus</taxon>
    </lineage>
</organism>
<sequence>MLPSTIQTLTLFLTSGGVLLSLYVSASLSYLLYSDILLKFSSKITAPTMTLDCANASNVQAVNRSATKEMTFLLPEPEWTYPRLSCQGSTFQKALLISPHRFGEARGNSAPLIIREPFIACGPKECKHFALTHYAAQPGGYYNGTREDRNKLRHLISVKLGKIPTVENSIFHMAAWSGSACHDGREWTYIGVDGPDSNALIKIKYGEAYTDTYHSYANNILRTQESACNCIGGDCYLMITDGSASGISKCRFLKIREGRIIKEIFPTGRVEHTEECTCGFASNKTIECACRDNSYTAKRPFVKLNVETDTAEIRLMCTETYLDTPRPDDGSITGPCESNGDKGRGGIKGGFVHQRMASKIGRWYSRTMSKTERMGMELYVRYDGDPWTDSDALAHSGVMVSMKEPGWYSFGFEIKDKKCDVPCIGIEMVHDGGKKTWHSAATAIYCLMGSGQLLWDTVTGVDMAL</sequence>
<organismHost>
    <name type="scientific">Homo sapiens</name>
    <name type="common">Human</name>
    <dbReference type="NCBI Taxonomy" id="9606"/>
</organismHost>
<accession>P27907</accession>
<gene>
    <name evidence="1" type="primary">NA</name>
</gene>
<protein>
    <recommendedName>
        <fullName evidence="1">Neuraminidase</fullName>
        <ecNumber evidence="1">3.2.1.18</ecNumber>
    </recommendedName>
</protein>
<feature type="chain" id="PRO_0000078730" description="Neuraminidase">
    <location>
        <begin position="1"/>
        <end position="465"/>
    </location>
</feature>
<feature type="topological domain" description="Intravirion" evidence="1">
    <location>
        <begin position="1"/>
        <end position="11"/>
    </location>
</feature>
<feature type="transmembrane region" description="Helical" evidence="1">
    <location>
        <begin position="12"/>
        <end position="34"/>
    </location>
</feature>
<feature type="topological domain" description="Virion surface" evidence="1">
    <location>
        <begin position="35"/>
        <end position="465"/>
    </location>
</feature>
<feature type="region of interest" description="Involved in apical transport and lipid raft association" evidence="1">
    <location>
        <begin position="13"/>
        <end position="35"/>
    </location>
</feature>
<feature type="region of interest" description="Hypervariable stalk region" evidence="1">
    <location>
        <begin position="38"/>
        <end position="85"/>
    </location>
</feature>
<feature type="region of interest" description="Head of neuraminidase" evidence="1">
    <location>
        <begin position="88"/>
        <end position="465"/>
    </location>
</feature>
<feature type="active site" description="Proton donor/acceptor" evidence="1">
    <location>
        <position position="148"/>
    </location>
</feature>
<feature type="active site" description="Nucleophile" evidence="1">
    <location>
        <position position="408"/>
    </location>
</feature>
<feature type="binding site" evidence="1">
    <location>
        <position position="115"/>
    </location>
    <ligand>
        <name>substrate</name>
    </ligand>
</feature>
<feature type="binding site" evidence="1">
    <location>
        <position position="149"/>
    </location>
    <ligand>
        <name>substrate</name>
    </ligand>
</feature>
<feature type="binding site" evidence="1">
    <location>
        <begin position="274"/>
        <end position="275"/>
    </location>
    <ligand>
        <name>substrate</name>
    </ligand>
</feature>
<feature type="binding site" evidence="1">
    <location>
        <position position="291"/>
    </location>
    <ligand>
        <name>substrate</name>
    </ligand>
</feature>
<feature type="binding site" evidence="1 2">
    <location>
        <position position="292"/>
    </location>
    <ligand>
        <name>Ca(2+)</name>
        <dbReference type="ChEBI" id="CHEBI:29108"/>
    </ligand>
</feature>
<feature type="binding site" evidence="2">
    <location>
        <position position="296"/>
    </location>
    <ligand>
        <name>Ca(2+)</name>
        <dbReference type="ChEBI" id="CHEBI:29108"/>
    </ligand>
</feature>
<feature type="binding site" evidence="1 2">
    <location>
        <position position="323"/>
    </location>
    <ligand>
        <name>Ca(2+)</name>
        <dbReference type="ChEBI" id="CHEBI:29108"/>
    </ligand>
</feature>
<feature type="binding site" evidence="2">
    <location>
        <position position="343"/>
    </location>
    <ligand>
        <name>Ca(2+)</name>
        <dbReference type="ChEBI" id="CHEBI:29108"/>
    </ligand>
</feature>
<feature type="binding site" evidence="2">
    <location>
        <position position="345"/>
    </location>
    <ligand>
        <name>Ca(2+)</name>
        <dbReference type="ChEBI" id="CHEBI:29108"/>
    </ligand>
</feature>
<feature type="binding site" evidence="1">
    <location>
        <position position="373"/>
    </location>
    <ligand>
        <name>substrate</name>
    </ligand>
</feature>
<feature type="glycosylation site" description="N-linked (GlcNAc...) asparagine; by host" evidence="1">
    <location>
        <position position="55"/>
    </location>
</feature>
<feature type="glycosylation site" description="N-linked (GlcNAc...) asparagine; by host" evidence="1">
    <location>
        <position position="63"/>
    </location>
</feature>
<feature type="glycosylation site" description="N-linked (GlcNAc...) asparagine; by host" evidence="1">
    <location>
        <position position="143"/>
    </location>
</feature>
<feature type="glycosylation site" description="N-linked (GlcNAc...) asparagine; by host" evidence="1 2">
    <location>
        <position position="283"/>
    </location>
</feature>
<feature type="disulfide bond" evidence="1">
    <location>
        <begin position="86"/>
        <end position="419"/>
    </location>
</feature>
<feature type="disulfide bond" evidence="1">
    <location>
        <begin position="121"/>
        <end position="126"/>
    </location>
</feature>
<feature type="disulfide bond" evidence="1">
    <location>
        <begin position="181"/>
        <end position="228"/>
    </location>
</feature>
<feature type="disulfide bond" evidence="1">
    <location>
        <begin position="230"/>
        <end position="235"/>
    </location>
</feature>
<feature type="disulfide bond" evidence="1">
    <location>
        <begin position="276"/>
        <end position="290"/>
    </location>
</feature>
<feature type="disulfide bond" evidence="1">
    <location>
        <begin position="278"/>
        <end position="288"/>
    </location>
</feature>
<feature type="disulfide bond" evidence="1">
    <location>
        <begin position="317"/>
        <end position="336"/>
    </location>
</feature>
<feature type="disulfide bond" evidence="1">
    <location>
        <begin position="423"/>
        <end position="446"/>
    </location>
</feature>
<feature type="strand" evidence="4">
    <location>
        <begin position="89"/>
        <end position="97"/>
    </location>
</feature>
<feature type="helix" evidence="4">
    <location>
        <begin position="99"/>
        <end position="102"/>
    </location>
</feature>
<feature type="strand" evidence="4">
    <location>
        <begin position="111"/>
        <end position="121"/>
    </location>
</feature>
<feature type="strand" evidence="4">
    <location>
        <begin position="126"/>
        <end position="140"/>
    </location>
</feature>
<feature type="turn" evidence="4">
    <location>
        <begin position="143"/>
        <end position="146"/>
    </location>
</feature>
<feature type="strand" evidence="4">
    <location>
        <begin position="154"/>
        <end position="159"/>
    </location>
</feature>
<feature type="turn" evidence="4">
    <location>
        <begin position="166"/>
        <end position="168"/>
    </location>
</feature>
<feature type="strand" evidence="4">
    <location>
        <begin position="170"/>
        <end position="174"/>
    </location>
</feature>
<feature type="strand" evidence="4">
    <location>
        <begin position="176"/>
        <end position="182"/>
    </location>
</feature>
<feature type="strand" evidence="4">
    <location>
        <begin position="187"/>
        <end position="194"/>
    </location>
</feature>
<feature type="helix" evidence="4">
    <location>
        <begin position="196"/>
        <end position="198"/>
    </location>
</feature>
<feature type="strand" evidence="4">
    <location>
        <begin position="200"/>
        <end position="205"/>
    </location>
</feature>
<feature type="strand" evidence="4">
    <location>
        <begin position="208"/>
        <end position="214"/>
    </location>
</feature>
<feature type="strand" evidence="4">
    <location>
        <begin position="216"/>
        <end position="219"/>
    </location>
</feature>
<feature type="strand" evidence="4">
    <location>
        <begin position="229"/>
        <end position="231"/>
    </location>
</feature>
<feature type="strand" evidence="4">
    <location>
        <begin position="234"/>
        <end position="242"/>
    </location>
</feature>
<feature type="strand" evidence="3">
    <location>
        <begin position="244"/>
        <end position="246"/>
    </location>
</feature>
<feature type="strand" evidence="4">
    <location>
        <begin position="248"/>
        <end position="256"/>
    </location>
</feature>
<feature type="strand" evidence="4">
    <location>
        <begin position="259"/>
        <end position="264"/>
    </location>
</feature>
<feature type="strand" evidence="4">
    <location>
        <begin position="267"/>
        <end position="269"/>
    </location>
</feature>
<feature type="strand" evidence="4">
    <location>
        <begin position="274"/>
        <end position="291"/>
    </location>
</feature>
<feature type="strand" evidence="4">
    <location>
        <begin position="293"/>
        <end position="295"/>
    </location>
</feature>
<feature type="strand" evidence="4">
    <location>
        <begin position="300"/>
        <end position="305"/>
    </location>
</feature>
<feature type="turn" evidence="4">
    <location>
        <begin position="306"/>
        <end position="309"/>
    </location>
</feature>
<feature type="strand" evidence="4">
    <location>
        <begin position="310"/>
        <end position="315"/>
    </location>
</feature>
<feature type="strand" evidence="4">
    <location>
        <begin position="323"/>
        <end position="325"/>
    </location>
</feature>
<feature type="strand" evidence="4">
    <location>
        <begin position="351"/>
        <end position="355"/>
    </location>
</feature>
<feature type="strand" evidence="4">
    <location>
        <begin position="360"/>
        <end position="366"/>
    </location>
</feature>
<feature type="strand" evidence="4">
    <location>
        <begin position="368"/>
        <end position="384"/>
    </location>
</feature>
<feature type="turn" evidence="4">
    <location>
        <begin position="386"/>
        <end position="388"/>
    </location>
</feature>
<feature type="strand" evidence="4">
    <location>
        <begin position="394"/>
        <end position="405"/>
    </location>
</feature>
<feature type="strand" evidence="4">
    <location>
        <begin position="409"/>
        <end position="415"/>
    </location>
</feature>
<feature type="strand" evidence="4">
    <location>
        <begin position="417"/>
        <end position="430"/>
    </location>
</feature>
<feature type="strand" evidence="4">
    <location>
        <begin position="439"/>
        <end position="447"/>
    </location>
</feature>
<feature type="strand" evidence="4">
    <location>
        <begin position="449"/>
        <end position="451"/>
    </location>
</feature>